<gene>
    <name type="primary">CRYGF</name>
</gene>
<proteinExistence type="evidence at protein level"/>
<accession>P23005</accession>
<feature type="chain" id="PRO_0000057584" description="Gamma-crystallin F">
    <location>
        <begin position="1"/>
        <end position="174"/>
    </location>
</feature>
<feature type="domain" description="Beta/gamma crystallin 'Greek key' 1" evidence="1">
    <location>
        <begin position="2"/>
        <end position="40"/>
    </location>
</feature>
<feature type="domain" description="Beta/gamma crystallin 'Greek key' 2" evidence="1">
    <location>
        <begin position="41"/>
        <end position="83"/>
    </location>
</feature>
<feature type="domain" description="Beta/gamma crystallin 'Greek key' 3" evidence="1">
    <location>
        <begin position="88"/>
        <end position="128"/>
    </location>
</feature>
<feature type="domain" description="Beta/gamma crystallin 'Greek key' 4" evidence="1">
    <location>
        <begin position="129"/>
        <end position="171"/>
    </location>
</feature>
<feature type="region of interest" description="Connecting peptide">
    <location>
        <begin position="84"/>
        <end position="87"/>
    </location>
</feature>
<feature type="strand" evidence="3">
    <location>
        <begin position="3"/>
        <end position="9"/>
    </location>
</feature>
<feature type="turn" evidence="3">
    <location>
        <begin position="10"/>
        <end position="12"/>
    </location>
</feature>
<feature type="strand" evidence="3">
    <location>
        <begin position="13"/>
        <end position="19"/>
    </location>
</feature>
<feature type="turn" evidence="3">
    <location>
        <begin position="27"/>
        <end position="29"/>
    </location>
</feature>
<feature type="strand" evidence="3">
    <location>
        <begin position="35"/>
        <end position="41"/>
    </location>
</feature>
<feature type="strand" evidence="3">
    <location>
        <begin position="43"/>
        <end position="48"/>
    </location>
</feature>
<feature type="helix" evidence="3">
    <location>
        <begin position="49"/>
        <end position="51"/>
    </location>
</feature>
<feature type="strand" evidence="3">
    <location>
        <begin position="53"/>
        <end position="58"/>
    </location>
</feature>
<feature type="strand" evidence="3">
    <location>
        <begin position="60"/>
        <end position="63"/>
    </location>
</feature>
<feature type="helix" evidence="3">
    <location>
        <begin position="66"/>
        <end position="69"/>
    </location>
</feature>
<feature type="strand" evidence="3">
    <location>
        <begin position="72"/>
        <end position="74"/>
    </location>
</feature>
<feature type="strand" evidence="3">
    <location>
        <begin position="78"/>
        <end position="81"/>
    </location>
</feature>
<feature type="strand" evidence="3">
    <location>
        <begin position="89"/>
        <end position="95"/>
    </location>
</feature>
<feature type="turn" evidence="3">
    <location>
        <begin position="96"/>
        <end position="98"/>
    </location>
</feature>
<feature type="strand" evidence="3">
    <location>
        <begin position="99"/>
        <end position="105"/>
    </location>
</feature>
<feature type="turn" evidence="3">
    <location>
        <begin position="112"/>
        <end position="114"/>
    </location>
</feature>
<feature type="strand" evidence="3">
    <location>
        <begin position="115"/>
        <end position="117"/>
    </location>
</feature>
<feature type="strand" evidence="3">
    <location>
        <begin position="123"/>
        <end position="129"/>
    </location>
</feature>
<feature type="strand" evidence="3">
    <location>
        <begin position="131"/>
        <end position="136"/>
    </location>
</feature>
<feature type="turn" evidence="3">
    <location>
        <begin position="137"/>
        <end position="139"/>
    </location>
</feature>
<feature type="strand" evidence="3">
    <location>
        <begin position="140"/>
        <end position="146"/>
    </location>
</feature>
<feature type="strand" evidence="3">
    <location>
        <begin position="148"/>
        <end position="153"/>
    </location>
</feature>
<feature type="helix" evidence="3">
    <location>
        <begin position="154"/>
        <end position="157"/>
    </location>
</feature>
<feature type="strand" evidence="3">
    <location>
        <begin position="166"/>
        <end position="169"/>
    </location>
</feature>
<keyword id="KW-0002">3D-structure</keyword>
<keyword id="KW-0273">Eye lens protein</keyword>
<keyword id="KW-1185">Reference proteome</keyword>
<keyword id="KW-0677">Repeat</keyword>
<evidence type="ECO:0000255" key="1">
    <source>
        <dbReference type="PROSITE-ProRule" id="PRU00028"/>
    </source>
</evidence>
<evidence type="ECO:0000305" key="2"/>
<evidence type="ECO:0007829" key="3">
    <source>
        <dbReference type="PDB" id="1M8U"/>
    </source>
</evidence>
<sequence length="174" mass="21086">MGKITFYEDRGFQGRHYECSSDHSNLQPYFSRCNSIRVDSGCWMLYEQPNFQGPQYFLRRGDYPDYQQWMGLNDSIRSCRLIPHTGSHRLRIYEREDYRGQMVEITEDCSSLHDRFHFSEIHSFNVLEGWWVLYEMTNYRGRQYLLRPGDYRRYHDWGATNARVGSLRRAVDFY</sequence>
<dbReference type="PDB" id="1A45">
    <property type="method" value="X-ray"/>
    <property type="resolution" value="2.30 A"/>
    <property type="chains" value="A=2-174"/>
</dbReference>
<dbReference type="PDB" id="1M8U">
    <property type="method" value="X-ray"/>
    <property type="resolution" value="1.65 A"/>
    <property type="chains" value="A=2-174"/>
</dbReference>
<dbReference type="PDBsum" id="1A45"/>
<dbReference type="PDBsum" id="1M8U"/>
<dbReference type="PCDDB" id="P23005"/>
<dbReference type="SMR" id="P23005"/>
<dbReference type="FunCoup" id="P23005">
    <property type="interactions" value="13"/>
</dbReference>
<dbReference type="STRING" id="9913.ENSBTAP00000018740"/>
<dbReference type="PaxDb" id="9913-ENSBTAP00000020038"/>
<dbReference type="Ensembl" id="ENSBTAT00000018740.4">
    <property type="protein sequence ID" value="ENSBTAP00000018740.4"/>
    <property type="gene ID" value="ENSBTAG00000052197.2"/>
</dbReference>
<dbReference type="KEGG" id="bta:616092"/>
<dbReference type="VEuPathDB" id="HostDB:ENSBTAG00000052197"/>
<dbReference type="eggNOG" id="ENOG502RXJY">
    <property type="taxonomic scope" value="Eukaryota"/>
</dbReference>
<dbReference type="GeneTree" id="ENSGT00940000158720"/>
<dbReference type="HOGENOM" id="CLU_081883_1_1_1"/>
<dbReference type="InParanoid" id="P23005"/>
<dbReference type="OMA" id="YRRRQDW"/>
<dbReference type="OrthoDB" id="8407241at2759"/>
<dbReference type="EvolutionaryTrace" id="P23005"/>
<dbReference type="Proteomes" id="UP000009136">
    <property type="component" value="Chromosome 2"/>
</dbReference>
<dbReference type="Bgee" id="ENSBTAG00000052197">
    <property type="expression patterns" value="Expressed in oocyte and 3 other cell types or tissues"/>
</dbReference>
<dbReference type="GO" id="GO:0005212">
    <property type="term" value="F:structural constituent of eye lens"/>
    <property type="evidence" value="ECO:0000318"/>
    <property type="project" value="GO_Central"/>
</dbReference>
<dbReference type="GO" id="GO:0002088">
    <property type="term" value="P:lens development in camera-type eye"/>
    <property type="evidence" value="ECO:0000318"/>
    <property type="project" value="GO_Central"/>
</dbReference>
<dbReference type="GO" id="GO:0007601">
    <property type="term" value="P:visual perception"/>
    <property type="evidence" value="ECO:0000318"/>
    <property type="project" value="GO_Central"/>
</dbReference>
<dbReference type="FunFam" id="2.60.20.10:FF:000001">
    <property type="entry name" value="Crystallin gamma S"/>
    <property type="match status" value="1"/>
</dbReference>
<dbReference type="FunFam" id="2.60.20.10:FF:000003">
    <property type="entry name" value="Crystallin gamma S"/>
    <property type="match status" value="1"/>
</dbReference>
<dbReference type="Gene3D" id="2.60.20.10">
    <property type="entry name" value="Crystallins"/>
    <property type="match status" value="2"/>
</dbReference>
<dbReference type="InterPro" id="IPR050252">
    <property type="entry name" value="Beta/Gamma-Crystallin"/>
</dbReference>
<dbReference type="InterPro" id="IPR001064">
    <property type="entry name" value="Beta/gamma_crystallin"/>
</dbReference>
<dbReference type="InterPro" id="IPR011024">
    <property type="entry name" value="G_crystallin-like"/>
</dbReference>
<dbReference type="PANTHER" id="PTHR11818">
    <property type="entry name" value="BETA/GAMMA CRYSTALLIN"/>
    <property type="match status" value="1"/>
</dbReference>
<dbReference type="PANTHER" id="PTHR11818:SF119">
    <property type="entry name" value="GAMMA-CRYSTALLIN D"/>
    <property type="match status" value="1"/>
</dbReference>
<dbReference type="Pfam" id="PF00030">
    <property type="entry name" value="Crystall"/>
    <property type="match status" value="2"/>
</dbReference>
<dbReference type="PRINTS" id="PR01367">
    <property type="entry name" value="BGCRYSTALLIN"/>
</dbReference>
<dbReference type="SMART" id="SM00247">
    <property type="entry name" value="XTALbg"/>
    <property type="match status" value="2"/>
</dbReference>
<dbReference type="SUPFAM" id="SSF49695">
    <property type="entry name" value="gamma-Crystallin-like"/>
    <property type="match status" value="1"/>
</dbReference>
<dbReference type="PROSITE" id="PS50915">
    <property type="entry name" value="CRYSTALLIN_BETA_GAMMA"/>
    <property type="match status" value="4"/>
</dbReference>
<reference key="1">
    <citation type="journal article" date="1989" name="J. Mol. Biol.">
        <title>Packing interactions in the eye-lens. Structural analysis, internal symmetry and lattice interactions of bovine gamma IVa-crystallin.</title>
        <authorList>
            <person name="White H.E."/>
            <person name="Driessen H.P.C."/>
            <person name="Slingsby C."/>
            <person name="Moss D.S."/>
            <person name="Lindley P.F."/>
        </authorList>
    </citation>
    <scope>X-RAY CRYSTALLOGRAPHY (2.3 ANGSTROMS)</scope>
</reference>
<reference key="2">
    <citation type="journal article" date="1997" name="Exp. Eye Res.">
        <title>Towards a molecular understanding of phase separation in the lens: a comparison of the X-ray structures of two high Tc gamma-crystallins, gammaE and gammaF, with two low Tc gamma-crystallins, gammaB and gammaD.</title>
        <authorList>
            <person name="Norledge B.V."/>
            <person name="Hay R.E."/>
            <person name="Bateman O.A."/>
            <person name="Slingsby C."/>
            <person name="Driessen H.P.C."/>
        </authorList>
    </citation>
    <scope>NUCLEOTIDE SEQUENCE</scope>
    <scope>X-RAY CRYSTALLOGRAPHY (2.3 ANGSTROMS)</scope>
</reference>
<name>CRGF_BOVIN</name>
<organism>
    <name type="scientific">Bos taurus</name>
    <name type="common">Bovine</name>
    <dbReference type="NCBI Taxonomy" id="9913"/>
    <lineage>
        <taxon>Eukaryota</taxon>
        <taxon>Metazoa</taxon>
        <taxon>Chordata</taxon>
        <taxon>Craniata</taxon>
        <taxon>Vertebrata</taxon>
        <taxon>Euteleostomi</taxon>
        <taxon>Mammalia</taxon>
        <taxon>Eutheria</taxon>
        <taxon>Laurasiatheria</taxon>
        <taxon>Artiodactyla</taxon>
        <taxon>Ruminantia</taxon>
        <taxon>Pecora</taxon>
        <taxon>Bovidae</taxon>
        <taxon>Bovinae</taxon>
        <taxon>Bos</taxon>
    </lineage>
</organism>
<comment type="function">
    <text>Crystallins are the dominant structural components of the vertebrate eye lens.</text>
</comment>
<comment type="domain">
    <text>Has a two-domain beta-structure, folded into four very similar Greek key motifs.</text>
</comment>
<comment type="similarity">
    <text evidence="2">Belongs to the beta/gamma-crystallin family.</text>
</comment>
<protein>
    <recommendedName>
        <fullName>Gamma-crystallin F</fullName>
    </recommendedName>
    <alternativeName>
        <fullName>Gamma-F-crystallin</fullName>
    </alternativeName>
    <alternativeName>
        <fullName>Gamma-crystallin IVA</fullName>
    </alternativeName>
</protein>